<sequence length="287" mass="30693">MEGKEEDVRVGANKFPERQPIGTSAQSTDKDYKEPPPAPLFEPGELSSWSFYRAGIAEFIATFLFLYITVLTVMGVKRAPNMCASVGIQGIAWAFGGMIFALVYCTAGISGGHINPAVTFGLFLARKLSLTRAVFYMIMQCLGAICGAGVVKGFQPTPYQTLGGGANTVAHGYTKGSGLGAEIIGTFVLVYTVFSATDAKRSARDSHVPILAPLPIGFAVFLVHLATIPITGTGINPARSLGAAIIYNKDHSWDDHWIFWVGPFIGAALAALYHQIVIRAIPFKSKS</sequence>
<accession>Q39196</accession>
<accession>O23059</accession>
<accession>O23829</accession>
<feature type="chain" id="PRO_0000064049" description="Probable aquaporin PIP1-4">
    <location>
        <begin position="1"/>
        <end position="287"/>
    </location>
</feature>
<feature type="topological domain" description="Cytoplasmic" evidence="3">
    <location>
        <begin position="1"/>
        <end position="55"/>
    </location>
</feature>
<feature type="transmembrane region" description="Helical; Name=1" evidence="3">
    <location>
        <begin position="56"/>
        <end position="76"/>
    </location>
</feature>
<feature type="topological domain" description="Extracellular" evidence="3">
    <location>
        <begin position="77"/>
        <end position="92"/>
    </location>
</feature>
<feature type="transmembrane region" description="Helical; Name=2" evidence="3">
    <location>
        <begin position="93"/>
        <end position="113"/>
    </location>
</feature>
<feature type="topological domain" description="Cytoplasmic" evidence="3">
    <location>
        <begin position="114"/>
        <end position="133"/>
    </location>
</feature>
<feature type="transmembrane region" description="Helical; Name=3" evidence="3">
    <location>
        <begin position="134"/>
        <end position="154"/>
    </location>
</feature>
<feature type="topological domain" description="Extracellular" evidence="3">
    <location>
        <begin position="155"/>
        <end position="175"/>
    </location>
</feature>
<feature type="transmembrane region" description="Helical; Name=4" evidence="3">
    <location>
        <begin position="176"/>
        <end position="196"/>
    </location>
</feature>
<feature type="topological domain" description="Cytoplasmic" evidence="3">
    <location>
        <begin position="197"/>
        <end position="209"/>
    </location>
</feature>
<feature type="transmembrane region" description="Helical; Name=5" evidence="3">
    <location>
        <begin position="210"/>
        <end position="230"/>
    </location>
</feature>
<feature type="topological domain" description="Extracellular" evidence="3">
    <location>
        <begin position="231"/>
        <end position="257"/>
    </location>
</feature>
<feature type="transmembrane region" description="Helical; Name=6" evidence="3">
    <location>
        <begin position="258"/>
        <end position="278"/>
    </location>
</feature>
<feature type="topological domain" description="Cytoplasmic" evidence="3">
    <location>
        <begin position="279"/>
        <end position="287"/>
    </location>
</feature>
<feature type="region of interest" description="Disordered" evidence="4">
    <location>
        <begin position="1"/>
        <end position="36"/>
    </location>
</feature>
<feature type="short sequence motif" description="NPA 1">
    <location>
        <begin position="115"/>
        <end position="117"/>
    </location>
</feature>
<feature type="short sequence motif" description="NPA 2">
    <location>
        <begin position="236"/>
        <end position="238"/>
    </location>
</feature>
<feature type="modified residue" description="N-acetylmethionine" evidence="6">
    <location>
        <position position="1"/>
    </location>
</feature>
<feature type="modified residue" description="Phosphoserine" evidence="2">
    <location>
        <position position="285"/>
    </location>
</feature>
<feature type="sequence conflict" description="In Ref. 2; BAA22097." evidence="7" ref="2">
    <original>A</original>
    <variation>V</variation>
    <location>
        <position position="25"/>
    </location>
</feature>
<feature type="sequence conflict" description="In Ref. 2; BAA22097." evidence="7" ref="2">
    <original>P</original>
    <variation>S</variation>
    <location>
        <position position="39"/>
    </location>
</feature>
<feature type="sequence conflict" description="In Ref. 2; BAA22097." evidence="7" ref="2">
    <original>V</original>
    <variation>G</variation>
    <location>
        <position position="169"/>
    </location>
</feature>
<feature type="sequence conflict" description="In Ref. 2; BAA22097." evidence="7" ref="2">
    <original>A</original>
    <variation>D</variation>
    <location>
        <position position="199"/>
    </location>
</feature>
<feature type="sequence conflict" description="In Ref. 2; BAA22097." evidence="7" ref="2">
    <original>A</original>
    <variation>V</variation>
    <location>
        <position position="203"/>
    </location>
</feature>
<reference key="1">
    <citation type="journal article" date="1994" name="Plant Physiol.">
        <title>Nucleotide sequence of a transmembrane protein (TMP-C) cDNA in Arabidopsis thaliana.</title>
        <authorList>
            <person name="Kinoshita T."/>
            <person name="Hara-Nishimura I."/>
            <person name="Shiraishi H."/>
            <person name="Okada K."/>
            <person name="Shimura Y."/>
            <person name="Nishimura M."/>
        </authorList>
    </citation>
    <scope>NUCLEOTIDE SEQUENCE [MRNA]</scope>
    <source>
        <strain>cv. Columbia</strain>
        <tissue>Flower bud</tissue>
    </source>
</reference>
<reference key="2">
    <citation type="journal article" date="1996" name="Plant Mol. Biol.">
        <title>Isolation and characterization of cDNA clones corresponding to the genes expressed preferentially in floral organs of Arabidopsis thaliana.</title>
        <authorList>
            <person name="Utsugi S."/>
            <person name="Sakamoto W."/>
            <person name="Ogura Y."/>
            <person name="Murata M."/>
            <person name="Motoyoshi F."/>
        </authorList>
    </citation>
    <scope>NUCLEOTIDE SEQUENCE [MRNA]</scope>
    <source>
        <strain>cv. Columbia</strain>
        <tissue>Flower bud</tissue>
    </source>
</reference>
<reference key="3">
    <citation type="journal article" date="1999" name="Nature">
        <title>Sequence and analysis of chromosome 4 of the plant Arabidopsis thaliana.</title>
        <authorList>
            <person name="Mayer K.F.X."/>
            <person name="Schueller C."/>
            <person name="Wambutt R."/>
            <person name="Murphy G."/>
            <person name="Volckaert G."/>
            <person name="Pohl T."/>
            <person name="Duesterhoeft A."/>
            <person name="Stiekema W."/>
            <person name="Entian K.-D."/>
            <person name="Terryn N."/>
            <person name="Harris B."/>
            <person name="Ansorge W."/>
            <person name="Brandt P."/>
            <person name="Grivell L.A."/>
            <person name="Rieger M."/>
            <person name="Weichselgartner M."/>
            <person name="de Simone V."/>
            <person name="Obermaier B."/>
            <person name="Mache R."/>
            <person name="Mueller M."/>
            <person name="Kreis M."/>
            <person name="Delseny M."/>
            <person name="Puigdomenech P."/>
            <person name="Watson M."/>
            <person name="Schmidtheini T."/>
            <person name="Reichert B."/>
            <person name="Portetelle D."/>
            <person name="Perez-Alonso M."/>
            <person name="Boutry M."/>
            <person name="Bancroft I."/>
            <person name="Vos P."/>
            <person name="Hoheisel J."/>
            <person name="Zimmermann W."/>
            <person name="Wedler H."/>
            <person name="Ridley P."/>
            <person name="Langham S.-A."/>
            <person name="McCullagh B."/>
            <person name="Bilham L."/>
            <person name="Robben J."/>
            <person name="van der Schueren J."/>
            <person name="Grymonprez B."/>
            <person name="Chuang Y.-J."/>
            <person name="Vandenbussche F."/>
            <person name="Braeken M."/>
            <person name="Weltjens I."/>
            <person name="Voet M."/>
            <person name="Bastiaens I."/>
            <person name="Aert R."/>
            <person name="Defoor E."/>
            <person name="Weitzenegger T."/>
            <person name="Bothe G."/>
            <person name="Ramsperger U."/>
            <person name="Hilbert H."/>
            <person name="Braun M."/>
            <person name="Holzer E."/>
            <person name="Brandt A."/>
            <person name="Peters S."/>
            <person name="van Staveren M."/>
            <person name="Dirkse W."/>
            <person name="Mooijman P."/>
            <person name="Klein Lankhorst R."/>
            <person name="Rose M."/>
            <person name="Hauf J."/>
            <person name="Koetter P."/>
            <person name="Berneiser S."/>
            <person name="Hempel S."/>
            <person name="Feldpausch M."/>
            <person name="Lamberth S."/>
            <person name="Van den Daele H."/>
            <person name="De Keyser A."/>
            <person name="Buysshaert C."/>
            <person name="Gielen J."/>
            <person name="Villarroel R."/>
            <person name="De Clercq R."/>
            <person name="van Montagu M."/>
            <person name="Rogers J."/>
            <person name="Cronin A."/>
            <person name="Quail M.A."/>
            <person name="Bray-Allen S."/>
            <person name="Clark L."/>
            <person name="Doggett J."/>
            <person name="Hall S."/>
            <person name="Kay M."/>
            <person name="Lennard N."/>
            <person name="McLay K."/>
            <person name="Mayes R."/>
            <person name="Pettett A."/>
            <person name="Rajandream M.A."/>
            <person name="Lyne M."/>
            <person name="Benes V."/>
            <person name="Rechmann S."/>
            <person name="Borkova D."/>
            <person name="Bloecker H."/>
            <person name="Scharfe M."/>
            <person name="Grimm M."/>
            <person name="Loehnert T.-H."/>
            <person name="Dose S."/>
            <person name="de Haan M."/>
            <person name="Maarse A.C."/>
            <person name="Schaefer M."/>
            <person name="Mueller-Auer S."/>
            <person name="Gabel C."/>
            <person name="Fuchs M."/>
            <person name="Fartmann B."/>
            <person name="Granderath K."/>
            <person name="Dauner D."/>
            <person name="Herzl A."/>
            <person name="Neumann S."/>
            <person name="Argiriou A."/>
            <person name="Vitale D."/>
            <person name="Liguori R."/>
            <person name="Piravandi E."/>
            <person name="Massenet O."/>
            <person name="Quigley F."/>
            <person name="Clabauld G."/>
            <person name="Muendlein A."/>
            <person name="Felber R."/>
            <person name="Schnabl S."/>
            <person name="Hiller R."/>
            <person name="Schmidt W."/>
            <person name="Lecharny A."/>
            <person name="Aubourg S."/>
            <person name="Chefdor F."/>
            <person name="Cooke R."/>
            <person name="Berger C."/>
            <person name="Monfort A."/>
            <person name="Casacuberta E."/>
            <person name="Gibbons T."/>
            <person name="Weber N."/>
            <person name="Vandenbol M."/>
            <person name="Bargues M."/>
            <person name="Terol J."/>
            <person name="Torres A."/>
            <person name="Perez-Perez A."/>
            <person name="Purnelle B."/>
            <person name="Bent E."/>
            <person name="Johnson S."/>
            <person name="Tacon D."/>
            <person name="Jesse T."/>
            <person name="Heijnen L."/>
            <person name="Schwarz S."/>
            <person name="Scholler P."/>
            <person name="Heber S."/>
            <person name="Francs P."/>
            <person name="Bielke C."/>
            <person name="Frishman D."/>
            <person name="Haase D."/>
            <person name="Lemcke K."/>
            <person name="Mewes H.-W."/>
            <person name="Stocker S."/>
            <person name="Zaccaria P."/>
            <person name="Bevan M."/>
            <person name="Wilson R.K."/>
            <person name="de la Bastide M."/>
            <person name="Habermann K."/>
            <person name="Parnell L."/>
            <person name="Dedhia N."/>
            <person name="Gnoj L."/>
            <person name="Schutz K."/>
            <person name="Huang E."/>
            <person name="Spiegel L."/>
            <person name="Sekhon M."/>
            <person name="Murray J."/>
            <person name="Sheet P."/>
            <person name="Cordes M."/>
            <person name="Abu-Threideh J."/>
            <person name="Stoneking T."/>
            <person name="Kalicki J."/>
            <person name="Graves T."/>
            <person name="Harmon G."/>
            <person name="Edwards J."/>
            <person name="Latreille P."/>
            <person name="Courtney L."/>
            <person name="Cloud J."/>
            <person name="Abbott A."/>
            <person name="Scott K."/>
            <person name="Johnson D."/>
            <person name="Minx P."/>
            <person name="Bentley D."/>
            <person name="Fulton B."/>
            <person name="Miller N."/>
            <person name="Greco T."/>
            <person name="Kemp K."/>
            <person name="Kramer J."/>
            <person name="Fulton L."/>
            <person name="Mardis E."/>
            <person name="Dante M."/>
            <person name="Pepin K."/>
            <person name="Hillier L.W."/>
            <person name="Nelson J."/>
            <person name="Spieth J."/>
            <person name="Ryan E."/>
            <person name="Andrews S."/>
            <person name="Geisel C."/>
            <person name="Layman D."/>
            <person name="Du H."/>
            <person name="Ali J."/>
            <person name="Berghoff A."/>
            <person name="Jones K."/>
            <person name="Drone K."/>
            <person name="Cotton M."/>
            <person name="Joshu C."/>
            <person name="Antonoiu B."/>
            <person name="Zidanic M."/>
            <person name="Strong C."/>
            <person name="Sun H."/>
            <person name="Lamar B."/>
            <person name="Yordan C."/>
            <person name="Ma P."/>
            <person name="Zhong J."/>
            <person name="Preston R."/>
            <person name="Vil D."/>
            <person name="Shekher M."/>
            <person name="Matero A."/>
            <person name="Shah R."/>
            <person name="Swaby I.K."/>
            <person name="O'Shaughnessy A."/>
            <person name="Rodriguez M."/>
            <person name="Hoffman J."/>
            <person name="Till S."/>
            <person name="Granat S."/>
            <person name="Shohdy N."/>
            <person name="Hasegawa A."/>
            <person name="Hameed A."/>
            <person name="Lodhi M."/>
            <person name="Johnson A."/>
            <person name="Chen E."/>
            <person name="Marra M.A."/>
            <person name="Martienssen R."/>
            <person name="McCombie W.R."/>
        </authorList>
    </citation>
    <scope>NUCLEOTIDE SEQUENCE [LARGE SCALE GENOMIC DNA]</scope>
    <source>
        <strain>cv. Columbia</strain>
    </source>
</reference>
<reference key="4">
    <citation type="journal article" date="2017" name="Plant J.">
        <title>Araport11: a complete reannotation of the Arabidopsis thaliana reference genome.</title>
        <authorList>
            <person name="Cheng C.Y."/>
            <person name="Krishnakumar V."/>
            <person name="Chan A.P."/>
            <person name="Thibaud-Nissen F."/>
            <person name="Schobel S."/>
            <person name="Town C.D."/>
        </authorList>
    </citation>
    <scope>GENOME REANNOTATION</scope>
    <source>
        <strain>cv. Columbia</strain>
    </source>
</reference>
<reference key="5">
    <citation type="journal article" date="2003" name="Science">
        <title>Empirical analysis of transcriptional activity in the Arabidopsis genome.</title>
        <authorList>
            <person name="Yamada K."/>
            <person name="Lim J."/>
            <person name="Dale J.M."/>
            <person name="Chen H."/>
            <person name="Shinn P."/>
            <person name="Palm C.J."/>
            <person name="Southwick A.M."/>
            <person name="Wu H.C."/>
            <person name="Kim C.J."/>
            <person name="Nguyen M."/>
            <person name="Pham P.K."/>
            <person name="Cheuk R.F."/>
            <person name="Karlin-Newmann G."/>
            <person name="Liu S.X."/>
            <person name="Lam B."/>
            <person name="Sakano H."/>
            <person name="Wu T."/>
            <person name="Yu G."/>
            <person name="Miranda M."/>
            <person name="Quach H.L."/>
            <person name="Tripp M."/>
            <person name="Chang C.H."/>
            <person name="Lee J.M."/>
            <person name="Toriumi M.J."/>
            <person name="Chan M.M."/>
            <person name="Tang C.C."/>
            <person name="Onodera C.S."/>
            <person name="Deng J.M."/>
            <person name="Akiyama K."/>
            <person name="Ansari Y."/>
            <person name="Arakawa T."/>
            <person name="Banh J."/>
            <person name="Banno F."/>
            <person name="Bowser L."/>
            <person name="Brooks S.Y."/>
            <person name="Carninci P."/>
            <person name="Chao Q."/>
            <person name="Choy N."/>
            <person name="Enju A."/>
            <person name="Goldsmith A.D."/>
            <person name="Gurjal M."/>
            <person name="Hansen N.F."/>
            <person name="Hayashizaki Y."/>
            <person name="Johnson-Hopson C."/>
            <person name="Hsuan V.W."/>
            <person name="Iida K."/>
            <person name="Karnes M."/>
            <person name="Khan S."/>
            <person name="Koesema E."/>
            <person name="Ishida J."/>
            <person name="Jiang P.X."/>
            <person name="Jones T."/>
            <person name="Kawai J."/>
            <person name="Kamiya A."/>
            <person name="Meyers C."/>
            <person name="Nakajima M."/>
            <person name="Narusaka M."/>
            <person name="Seki M."/>
            <person name="Sakurai T."/>
            <person name="Satou M."/>
            <person name="Tamse R."/>
            <person name="Vaysberg M."/>
            <person name="Wallender E.K."/>
            <person name="Wong C."/>
            <person name="Yamamura Y."/>
            <person name="Yuan S."/>
            <person name="Shinozaki K."/>
            <person name="Davis R.W."/>
            <person name="Theologis A."/>
            <person name="Ecker J.R."/>
        </authorList>
    </citation>
    <scope>NUCLEOTIDE SEQUENCE [LARGE SCALE MRNA]</scope>
    <source>
        <strain>cv. Columbia</strain>
    </source>
</reference>
<reference key="6">
    <citation type="journal article" date="2002" name="Genome Biol.">
        <title>From genome to function: the Arabidopsis aquaporins.</title>
        <authorList>
            <person name="Quigley F."/>
            <person name="Rosenberg J.M."/>
            <person name="Shachar-Hill Y."/>
            <person name="Bohnert H.J."/>
        </authorList>
    </citation>
    <scope>NOMENCLATURE</scope>
    <scope>TISSUE SPECIFICITY</scope>
</reference>
<reference key="7">
    <citation type="journal article" date="2006" name="Biochem. J.">
        <title>Methylation of aquaporins in plant plasma membrane.</title>
        <authorList>
            <person name="Santoni V."/>
            <person name="Verdoucq L."/>
            <person name="Sommerer N."/>
            <person name="Vinh J."/>
            <person name="Pflieger D."/>
            <person name="Maurel C."/>
        </authorList>
    </citation>
    <scope>ACETYLATION AT MET-1</scope>
    <scope>IDENTIFICATION BY MASS SPECTROMETRY</scope>
</reference>
<evidence type="ECO:0000250" key="1"/>
<evidence type="ECO:0000250" key="2">
    <source>
        <dbReference type="UniProtKB" id="P43286"/>
    </source>
</evidence>
<evidence type="ECO:0000255" key="3"/>
<evidence type="ECO:0000256" key="4">
    <source>
        <dbReference type="SAM" id="MobiDB-lite"/>
    </source>
</evidence>
<evidence type="ECO:0000269" key="5">
    <source>
    </source>
</evidence>
<evidence type="ECO:0000269" key="6">
    <source>
    </source>
</evidence>
<evidence type="ECO:0000305" key="7"/>
<keyword id="KW-0007">Acetylation</keyword>
<keyword id="KW-0025">Alternative splicing</keyword>
<keyword id="KW-1003">Cell membrane</keyword>
<keyword id="KW-0472">Membrane</keyword>
<keyword id="KW-0597">Phosphoprotein</keyword>
<keyword id="KW-1185">Reference proteome</keyword>
<keyword id="KW-0677">Repeat</keyword>
<keyword id="KW-0812">Transmembrane</keyword>
<keyword id="KW-1133">Transmembrane helix</keyword>
<keyword id="KW-0813">Transport</keyword>
<comment type="function">
    <text evidence="1">Aquaporins facilitate the transport of water and small neutral solutes across cell membranes.</text>
</comment>
<comment type="interaction">
    <interactant intactId="EBI-4427223">
        <id>Q39196</id>
    </interactant>
    <interactant intactId="EBI-4425112">
        <id>Q9SV31</id>
        <label>PIP2-5</label>
    </interactant>
    <organismsDiffer>false</organismsDiffer>
    <experiments>4</experiments>
</comment>
<comment type="interaction">
    <interactant intactId="EBI-4427223">
        <id>Q39196</id>
    </interactant>
    <interactant intactId="EBI-4434233">
        <id>P93004</id>
        <label>PIP2-7</label>
    </interactant>
    <organismsDiffer>false</organismsDiffer>
    <experiments>3</experiments>
</comment>
<comment type="interaction">
    <interactant intactId="EBI-4427223">
        <id>Q39196</id>
    </interactant>
    <interactant intactId="EBI-4425116">
        <id>Q9ZVX8</id>
        <label>PIP2-8</label>
    </interactant>
    <organismsDiffer>false</organismsDiffer>
    <experiments>5</experiments>
</comment>
<comment type="subcellular location">
    <subcellularLocation>
        <location evidence="1">Cell membrane</location>
        <topology evidence="1">Multi-pass membrane protein</topology>
    </subcellularLocation>
</comment>
<comment type="alternative products">
    <event type="alternative splicing"/>
    <isoform>
        <id>Q39196-1</id>
        <name>1</name>
        <sequence type="displayed"/>
    </isoform>
    <text>A number of isoforms are produced. According to EST sequences.</text>
</comment>
<comment type="tissue specificity">
    <text evidence="5">Predominantly expressed in roots and green siliques. Also expressed above ground and in flower buds.</text>
</comment>
<comment type="domain">
    <text>Aquaporins contain two tandem repeats each containing three membrane-spanning domains and a pore-forming loop with the signature motif Asn-Pro-Ala (NPA).</text>
</comment>
<comment type="similarity">
    <text evidence="7">Belongs to the MIP/aquaporin (TC 1.A.8) family. PIP (TC 1.A.8.11) subfamily.</text>
</comment>
<comment type="sequence caution" evidence="7">
    <conflict type="erroneous gene model prediction">
        <sequence resource="EMBL-CDS" id="AAB62824"/>
    </conflict>
</comment>
<comment type="sequence caution" evidence="7">
    <conflict type="erroneous gene model prediction">
        <sequence resource="EMBL-CDS" id="AAF02782"/>
    </conflict>
</comment>
<comment type="sequence caution" evidence="7">
    <conflict type="erroneous gene model prediction">
        <sequence resource="EMBL-CDS" id="CAB80801"/>
    </conflict>
</comment>
<organism>
    <name type="scientific">Arabidopsis thaliana</name>
    <name type="common">Mouse-ear cress</name>
    <dbReference type="NCBI Taxonomy" id="3702"/>
    <lineage>
        <taxon>Eukaryota</taxon>
        <taxon>Viridiplantae</taxon>
        <taxon>Streptophyta</taxon>
        <taxon>Embryophyta</taxon>
        <taxon>Tracheophyta</taxon>
        <taxon>Spermatophyta</taxon>
        <taxon>Magnoliopsida</taxon>
        <taxon>eudicotyledons</taxon>
        <taxon>Gunneridae</taxon>
        <taxon>Pentapetalae</taxon>
        <taxon>rosids</taxon>
        <taxon>malvids</taxon>
        <taxon>Brassicales</taxon>
        <taxon>Brassicaceae</taxon>
        <taxon>Camelineae</taxon>
        <taxon>Arabidopsis</taxon>
    </lineage>
</organism>
<dbReference type="EMBL" id="D26609">
    <property type="protein sequence ID" value="BAA05654.1"/>
    <property type="molecule type" value="mRNA"/>
</dbReference>
<dbReference type="EMBL" id="D85192">
    <property type="protein sequence ID" value="BAA22097.1"/>
    <property type="molecule type" value="mRNA"/>
</dbReference>
<dbReference type="EMBL" id="AF013293">
    <property type="protein sequence ID" value="AAB62824.1"/>
    <property type="status" value="ALT_SEQ"/>
    <property type="molecule type" value="Genomic_DNA"/>
</dbReference>
<dbReference type="EMBL" id="AF195115">
    <property type="protein sequence ID" value="AAF02782.1"/>
    <property type="status" value="ALT_SEQ"/>
    <property type="molecule type" value="Genomic_DNA"/>
</dbReference>
<dbReference type="EMBL" id="AL161471">
    <property type="protein sequence ID" value="CAB80801.1"/>
    <property type="status" value="ALT_SEQ"/>
    <property type="molecule type" value="Genomic_DNA"/>
</dbReference>
<dbReference type="EMBL" id="CP002687">
    <property type="protein sequence ID" value="AEE81879.1"/>
    <property type="molecule type" value="Genomic_DNA"/>
</dbReference>
<dbReference type="EMBL" id="AY099825">
    <property type="protein sequence ID" value="AAM20676.1"/>
    <property type="molecule type" value="mRNA"/>
</dbReference>
<dbReference type="EMBL" id="AY120785">
    <property type="protein sequence ID" value="AAM53343.1"/>
    <property type="molecule type" value="mRNA"/>
</dbReference>
<dbReference type="EMBL" id="BT000330">
    <property type="protein sequence ID" value="AAN15649.1"/>
    <property type="molecule type" value="mRNA"/>
</dbReference>
<dbReference type="EMBL" id="BT006313">
    <property type="protein sequence ID" value="AAP13421.1"/>
    <property type="molecule type" value="mRNA"/>
</dbReference>
<dbReference type="PIR" id="T01528">
    <property type="entry name" value="T01528"/>
</dbReference>
<dbReference type="RefSeq" id="NP_567178.1">
    <molecule id="Q39196-1"/>
    <property type="nucleotide sequence ID" value="NM_116268.4"/>
</dbReference>
<dbReference type="SMR" id="Q39196"/>
<dbReference type="BioGRID" id="13247">
    <property type="interactions" value="17"/>
</dbReference>
<dbReference type="FunCoup" id="Q39196">
    <property type="interactions" value="240"/>
</dbReference>
<dbReference type="IntAct" id="Q39196">
    <property type="interactions" value="11"/>
</dbReference>
<dbReference type="STRING" id="3702.Q39196"/>
<dbReference type="iPTMnet" id="Q39196"/>
<dbReference type="SwissPalm" id="Q39196"/>
<dbReference type="PaxDb" id="3702-AT4G00430.1"/>
<dbReference type="ProteomicsDB" id="234959">
    <molecule id="Q39196-1"/>
</dbReference>
<dbReference type="EnsemblPlants" id="AT4G00430.1">
    <molecule id="Q39196-1"/>
    <property type="protein sequence ID" value="AT4G00430.1"/>
    <property type="gene ID" value="AT4G00430"/>
</dbReference>
<dbReference type="GeneID" id="827956"/>
<dbReference type="Gramene" id="AT4G00430.1">
    <molecule id="Q39196-1"/>
    <property type="protein sequence ID" value="AT4G00430.1"/>
    <property type="gene ID" value="AT4G00430"/>
</dbReference>
<dbReference type="KEGG" id="ath:AT4G00430"/>
<dbReference type="Araport" id="AT4G00430"/>
<dbReference type="TAIR" id="AT4G00430">
    <property type="gene designation" value="PIP1"/>
</dbReference>
<dbReference type="eggNOG" id="KOG0223">
    <property type="taxonomic scope" value="Eukaryota"/>
</dbReference>
<dbReference type="HOGENOM" id="CLU_020019_3_0_1"/>
<dbReference type="InParanoid" id="Q39196"/>
<dbReference type="OMA" id="IFWTGAG"/>
<dbReference type="OrthoDB" id="3222at2759"/>
<dbReference type="PhylomeDB" id="Q39196"/>
<dbReference type="PRO" id="PR:Q39196"/>
<dbReference type="Proteomes" id="UP000006548">
    <property type="component" value="Chromosome 4"/>
</dbReference>
<dbReference type="ExpressionAtlas" id="Q39196">
    <property type="expression patterns" value="baseline and differential"/>
</dbReference>
<dbReference type="GO" id="GO:0005829">
    <property type="term" value="C:cytosol"/>
    <property type="evidence" value="ECO:0007005"/>
    <property type="project" value="TAIR"/>
</dbReference>
<dbReference type="GO" id="GO:0005886">
    <property type="term" value="C:plasma membrane"/>
    <property type="evidence" value="ECO:0007005"/>
    <property type="project" value="TAIR"/>
</dbReference>
<dbReference type="GO" id="GO:0015250">
    <property type="term" value="F:water channel activity"/>
    <property type="evidence" value="ECO:0000250"/>
    <property type="project" value="TAIR"/>
</dbReference>
<dbReference type="GO" id="GO:0009414">
    <property type="term" value="P:response to water deprivation"/>
    <property type="evidence" value="ECO:0000270"/>
    <property type="project" value="TAIR"/>
</dbReference>
<dbReference type="GO" id="GO:0006833">
    <property type="term" value="P:water transport"/>
    <property type="evidence" value="ECO:0000315"/>
    <property type="project" value="TAIR"/>
</dbReference>
<dbReference type="CDD" id="cd00333">
    <property type="entry name" value="MIP"/>
    <property type="match status" value="1"/>
</dbReference>
<dbReference type="FunFam" id="1.20.1080.10:FF:000001">
    <property type="entry name" value="Probable aquaporin PIP1-2"/>
    <property type="match status" value="1"/>
</dbReference>
<dbReference type="Gene3D" id="1.20.1080.10">
    <property type="entry name" value="Glycerol uptake facilitator protein"/>
    <property type="match status" value="1"/>
</dbReference>
<dbReference type="InterPro" id="IPR023271">
    <property type="entry name" value="Aquaporin-like"/>
</dbReference>
<dbReference type="InterPro" id="IPR034294">
    <property type="entry name" value="Aquaporin_transptr"/>
</dbReference>
<dbReference type="InterPro" id="IPR000425">
    <property type="entry name" value="MIP"/>
</dbReference>
<dbReference type="InterPro" id="IPR022357">
    <property type="entry name" value="MIP_CS"/>
</dbReference>
<dbReference type="NCBIfam" id="TIGR00861">
    <property type="entry name" value="MIP"/>
    <property type="match status" value="1"/>
</dbReference>
<dbReference type="PANTHER" id="PTHR45687">
    <property type="entry name" value="AQUAPORIN OR AQUAGLYCEROPORIN RELATED"/>
    <property type="match status" value="1"/>
</dbReference>
<dbReference type="Pfam" id="PF00230">
    <property type="entry name" value="MIP"/>
    <property type="match status" value="1"/>
</dbReference>
<dbReference type="PRINTS" id="PR00783">
    <property type="entry name" value="MINTRINSICP"/>
</dbReference>
<dbReference type="SUPFAM" id="SSF81338">
    <property type="entry name" value="Aquaporin-like"/>
    <property type="match status" value="1"/>
</dbReference>
<dbReference type="PROSITE" id="PS00221">
    <property type="entry name" value="MIP"/>
    <property type="match status" value="1"/>
</dbReference>
<gene>
    <name type="primary">PIP1.4</name>
    <name type="synonym">TMPC</name>
    <name type="ordered locus">At4g00430</name>
    <name type="ORF">A_IG005I10.2</name>
    <name type="ORF">F5I10.2</name>
</gene>
<proteinExistence type="evidence at protein level"/>
<name>PIP14_ARATH</name>
<protein>
    <recommendedName>
        <fullName>Probable aquaporin PIP1-4</fullName>
    </recommendedName>
    <alternativeName>
        <fullName>Plasma membrane intrinsic protein 1-4</fullName>
        <shortName>AtPIP1;4</shortName>
    </alternativeName>
    <alternativeName>
        <fullName>Transmembrane protein C</fullName>
        <shortName>TMP-C</shortName>
    </alternativeName>
</protein>